<feature type="chain" id="PRO_1000201405" description="Elongation factor Tu">
    <location>
        <begin position="1"/>
        <end position="395"/>
    </location>
</feature>
<feature type="domain" description="tr-type G">
    <location>
        <begin position="10"/>
        <end position="204"/>
    </location>
</feature>
<feature type="region of interest" description="G1" evidence="1">
    <location>
        <begin position="19"/>
        <end position="26"/>
    </location>
</feature>
<feature type="region of interest" description="G2" evidence="1">
    <location>
        <begin position="60"/>
        <end position="64"/>
    </location>
</feature>
<feature type="region of interest" description="G3" evidence="1">
    <location>
        <begin position="81"/>
        <end position="84"/>
    </location>
</feature>
<feature type="region of interest" description="G4" evidence="1">
    <location>
        <begin position="136"/>
        <end position="139"/>
    </location>
</feature>
<feature type="region of interest" description="G5" evidence="1">
    <location>
        <begin position="174"/>
        <end position="176"/>
    </location>
</feature>
<feature type="binding site" evidence="2">
    <location>
        <begin position="19"/>
        <end position="26"/>
    </location>
    <ligand>
        <name>GTP</name>
        <dbReference type="ChEBI" id="CHEBI:37565"/>
    </ligand>
</feature>
<feature type="binding site" evidence="2">
    <location>
        <position position="26"/>
    </location>
    <ligand>
        <name>Mg(2+)</name>
        <dbReference type="ChEBI" id="CHEBI:18420"/>
    </ligand>
</feature>
<feature type="binding site" evidence="2">
    <location>
        <begin position="81"/>
        <end position="85"/>
    </location>
    <ligand>
        <name>GTP</name>
        <dbReference type="ChEBI" id="CHEBI:37565"/>
    </ligand>
</feature>
<feature type="binding site" evidence="2">
    <location>
        <begin position="136"/>
        <end position="139"/>
    </location>
    <ligand>
        <name>GTP</name>
        <dbReference type="ChEBI" id="CHEBI:37565"/>
    </ligand>
</feature>
<reference key="1">
    <citation type="journal article" date="2009" name="J. Bacteriol.">
        <title>Complete genome sequence of Macrococcus caseolyticus strain JCSCS5402, reflecting the ancestral genome of the human-pathogenic staphylococci.</title>
        <authorList>
            <person name="Baba T."/>
            <person name="Kuwahara-Arai K."/>
            <person name="Uchiyama I."/>
            <person name="Takeuchi F."/>
            <person name="Ito T."/>
            <person name="Hiramatsu K."/>
        </authorList>
    </citation>
    <scope>NUCLEOTIDE SEQUENCE [LARGE SCALE GENOMIC DNA]</scope>
    <source>
        <strain>JCSC5402</strain>
    </source>
</reference>
<accession>B9E8Q0</accession>
<sequence>MAKEKFDRSKTHANIGTIGHVDHGKTTLTAAIATVLSKKLGGEARSYDQIDNAPEEKERGITINTSHIEYETEKRHYAHVDCPGHADYVKNMITGAAQMDGGILVVSAADGPMPQTREHILLSRNVGVPALVVFLNKVDMVDDEELLELVEMEVRDLLSEYDFPGDDVPVIAGSALKALEGVEEYEDKIMELMDAVDEYIPTPERDSDKPFMMPVEDVFSITGRGTVATGRVERGQVKVGEEVEIIGLTEEPSKTTVTGVEMFRKLLDYAEAGDNIGALLRGVSREDVQRGQVLAKPGSITPHTKFKAEVYVLSKEEGGRHTPFFTNYRPQFYFRTTDVTGVVNLPEGTEMVMPGDNIEMNVELISPIAIEDGTRFSIREGGRTVGSGVVSVIEK</sequence>
<protein>
    <recommendedName>
        <fullName evidence="2">Elongation factor Tu</fullName>
        <shortName evidence="2">EF-Tu</shortName>
        <ecNumber evidence="2">3.6.5.3</ecNumber>
    </recommendedName>
</protein>
<name>EFTU_MACCJ</name>
<gene>
    <name evidence="2" type="primary">tuf</name>
    <name type="ordered locus">MCCL_1861</name>
</gene>
<dbReference type="EC" id="3.6.5.3" evidence="2"/>
<dbReference type="EMBL" id="AP009484">
    <property type="protein sequence ID" value="BAH18568.1"/>
    <property type="molecule type" value="Genomic_DNA"/>
</dbReference>
<dbReference type="RefSeq" id="WP_015912360.1">
    <property type="nucleotide sequence ID" value="NC_011999.1"/>
</dbReference>
<dbReference type="SMR" id="B9E8Q0"/>
<dbReference type="STRING" id="458233.MCCL_1861"/>
<dbReference type="KEGG" id="mcl:MCCL_1861"/>
<dbReference type="eggNOG" id="COG0050">
    <property type="taxonomic scope" value="Bacteria"/>
</dbReference>
<dbReference type="HOGENOM" id="CLU_007265_0_1_9"/>
<dbReference type="OrthoDB" id="9804504at2"/>
<dbReference type="Proteomes" id="UP000001383">
    <property type="component" value="Chromosome"/>
</dbReference>
<dbReference type="GO" id="GO:0005829">
    <property type="term" value="C:cytosol"/>
    <property type="evidence" value="ECO:0007669"/>
    <property type="project" value="TreeGrafter"/>
</dbReference>
<dbReference type="GO" id="GO:0005525">
    <property type="term" value="F:GTP binding"/>
    <property type="evidence" value="ECO:0007669"/>
    <property type="project" value="UniProtKB-UniRule"/>
</dbReference>
<dbReference type="GO" id="GO:0003924">
    <property type="term" value="F:GTPase activity"/>
    <property type="evidence" value="ECO:0007669"/>
    <property type="project" value="InterPro"/>
</dbReference>
<dbReference type="GO" id="GO:0003746">
    <property type="term" value="F:translation elongation factor activity"/>
    <property type="evidence" value="ECO:0007669"/>
    <property type="project" value="UniProtKB-UniRule"/>
</dbReference>
<dbReference type="CDD" id="cd01884">
    <property type="entry name" value="EF_Tu"/>
    <property type="match status" value="1"/>
</dbReference>
<dbReference type="CDD" id="cd03697">
    <property type="entry name" value="EFTU_II"/>
    <property type="match status" value="1"/>
</dbReference>
<dbReference type="CDD" id="cd03707">
    <property type="entry name" value="EFTU_III"/>
    <property type="match status" value="1"/>
</dbReference>
<dbReference type="FunFam" id="2.40.30.10:FF:000001">
    <property type="entry name" value="Elongation factor Tu"/>
    <property type="match status" value="1"/>
</dbReference>
<dbReference type="FunFam" id="3.40.50.300:FF:000003">
    <property type="entry name" value="Elongation factor Tu"/>
    <property type="match status" value="1"/>
</dbReference>
<dbReference type="Gene3D" id="3.40.50.300">
    <property type="entry name" value="P-loop containing nucleotide triphosphate hydrolases"/>
    <property type="match status" value="1"/>
</dbReference>
<dbReference type="Gene3D" id="2.40.30.10">
    <property type="entry name" value="Translation factors"/>
    <property type="match status" value="2"/>
</dbReference>
<dbReference type="HAMAP" id="MF_00118_B">
    <property type="entry name" value="EF_Tu_B"/>
    <property type="match status" value="1"/>
</dbReference>
<dbReference type="InterPro" id="IPR041709">
    <property type="entry name" value="EF-Tu_GTP-bd"/>
</dbReference>
<dbReference type="InterPro" id="IPR050055">
    <property type="entry name" value="EF-Tu_GTPase"/>
</dbReference>
<dbReference type="InterPro" id="IPR004161">
    <property type="entry name" value="EFTu-like_2"/>
</dbReference>
<dbReference type="InterPro" id="IPR033720">
    <property type="entry name" value="EFTU_2"/>
</dbReference>
<dbReference type="InterPro" id="IPR031157">
    <property type="entry name" value="G_TR_CS"/>
</dbReference>
<dbReference type="InterPro" id="IPR027417">
    <property type="entry name" value="P-loop_NTPase"/>
</dbReference>
<dbReference type="InterPro" id="IPR005225">
    <property type="entry name" value="Small_GTP-bd"/>
</dbReference>
<dbReference type="InterPro" id="IPR000795">
    <property type="entry name" value="T_Tr_GTP-bd_dom"/>
</dbReference>
<dbReference type="InterPro" id="IPR009000">
    <property type="entry name" value="Transl_B-barrel_sf"/>
</dbReference>
<dbReference type="InterPro" id="IPR009001">
    <property type="entry name" value="Transl_elong_EF1A/Init_IF2_C"/>
</dbReference>
<dbReference type="InterPro" id="IPR004541">
    <property type="entry name" value="Transl_elong_EFTu/EF1A_bac/org"/>
</dbReference>
<dbReference type="InterPro" id="IPR004160">
    <property type="entry name" value="Transl_elong_EFTu/EF1A_C"/>
</dbReference>
<dbReference type="NCBIfam" id="TIGR00485">
    <property type="entry name" value="EF-Tu"/>
    <property type="match status" value="1"/>
</dbReference>
<dbReference type="NCBIfam" id="NF000766">
    <property type="entry name" value="PRK00049.1"/>
    <property type="match status" value="1"/>
</dbReference>
<dbReference type="NCBIfam" id="NF009372">
    <property type="entry name" value="PRK12735.1"/>
    <property type="match status" value="1"/>
</dbReference>
<dbReference type="NCBIfam" id="NF009373">
    <property type="entry name" value="PRK12736.1"/>
    <property type="match status" value="1"/>
</dbReference>
<dbReference type="NCBIfam" id="TIGR00231">
    <property type="entry name" value="small_GTP"/>
    <property type="match status" value="1"/>
</dbReference>
<dbReference type="PANTHER" id="PTHR43721:SF22">
    <property type="entry name" value="ELONGATION FACTOR TU, MITOCHONDRIAL"/>
    <property type="match status" value="1"/>
</dbReference>
<dbReference type="PANTHER" id="PTHR43721">
    <property type="entry name" value="ELONGATION FACTOR TU-RELATED"/>
    <property type="match status" value="1"/>
</dbReference>
<dbReference type="Pfam" id="PF00009">
    <property type="entry name" value="GTP_EFTU"/>
    <property type="match status" value="1"/>
</dbReference>
<dbReference type="Pfam" id="PF03144">
    <property type="entry name" value="GTP_EFTU_D2"/>
    <property type="match status" value="1"/>
</dbReference>
<dbReference type="Pfam" id="PF03143">
    <property type="entry name" value="GTP_EFTU_D3"/>
    <property type="match status" value="1"/>
</dbReference>
<dbReference type="PRINTS" id="PR00315">
    <property type="entry name" value="ELONGATNFCT"/>
</dbReference>
<dbReference type="SUPFAM" id="SSF50465">
    <property type="entry name" value="EF-Tu/eEF-1alpha/eIF2-gamma C-terminal domain"/>
    <property type="match status" value="1"/>
</dbReference>
<dbReference type="SUPFAM" id="SSF52540">
    <property type="entry name" value="P-loop containing nucleoside triphosphate hydrolases"/>
    <property type="match status" value="1"/>
</dbReference>
<dbReference type="SUPFAM" id="SSF50447">
    <property type="entry name" value="Translation proteins"/>
    <property type="match status" value="1"/>
</dbReference>
<dbReference type="PROSITE" id="PS00301">
    <property type="entry name" value="G_TR_1"/>
    <property type="match status" value="1"/>
</dbReference>
<dbReference type="PROSITE" id="PS51722">
    <property type="entry name" value="G_TR_2"/>
    <property type="match status" value="1"/>
</dbReference>
<organism>
    <name type="scientific">Macrococcus caseolyticus (strain JCSC5402)</name>
    <name type="common">Macrococcoides caseolyticum</name>
    <dbReference type="NCBI Taxonomy" id="458233"/>
    <lineage>
        <taxon>Bacteria</taxon>
        <taxon>Bacillati</taxon>
        <taxon>Bacillota</taxon>
        <taxon>Bacilli</taxon>
        <taxon>Bacillales</taxon>
        <taxon>Staphylococcaceae</taxon>
        <taxon>Macrococcoides</taxon>
    </lineage>
</organism>
<keyword id="KW-0963">Cytoplasm</keyword>
<keyword id="KW-0251">Elongation factor</keyword>
<keyword id="KW-0342">GTP-binding</keyword>
<keyword id="KW-0378">Hydrolase</keyword>
<keyword id="KW-0460">Magnesium</keyword>
<keyword id="KW-0479">Metal-binding</keyword>
<keyword id="KW-0547">Nucleotide-binding</keyword>
<keyword id="KW-0648">Protein biosynthesis</keyword>
<keyword id="KW-1185">Reference proteome</keyword>
<comment type="function">
    <text evidence="2">GTP hydrolase that promotes the GTP-dependent binding of aminoacyl-tRNA to the A-site of ribosomes during protein biosynthesis.</text>
</comment>
<comment type="catalytic activity">
    <reaction evidence="2">
        <text>GTP + H2O = GDP + phosphate + H(+)</text>
        <dbReference type="Rhea" id="RHEA:19669"/>
        <dbReference type="ChEBI" id="CHEBI:15377"/>
        <dbReference type="ChEBI" id="CHEBI:15378"/>
        <dbReference type="ChEBI" id="CHEBI:37565"/>
        <dbReference type="ChEBI" id="CHEBI:43474"/>
        <dbReference type="ChEBI" id="CHEBI:58189"/>
        <dbReference type="EC" id="3.6.5.3"/>
    </reaction>
    <physiologicalReaction direction="left-to-right" evidence="2">
        <dbReference type="Rhea" id="RHEA:19670"/>
    </physiologicalReaction>
</comment>
<comment type="subunit">
    <text evidence="2">Monomer.</text>
</comment>
<comment type="subcellular location">
    <subcellularLocation>
        <location evidence="2">Cytoplasm</location>
    </subcellularLocation>
</comment>
<comment type="similarity">
    <text evidence="2">Belongs to the TRAFAC class translation factor GTPase superfamily. Classic translation factor GTPase family. EF-Tu/EF-1A subfamily.</text>
</comment>
<evidence type="ECO:0000250" key="1"/>
<evidence type="ECO:0000255" key="2">
    <source>
        <dbReference type="HAMAP-Rule" id="MF_00118"/>
    </source>
</evidence>
<proteinExistence type="inferred from homology"/>